<evidence type="ECO:0000255" key="1">
    <source>
        <dbReference type="HAMAP-Rule" id="MF_00183"/>
    </source>
</evidence>
<comment type="function">
    <text evidence="1">Catalyzes the NADPH-dependent rearrangement and reduction of 1-deoxy-D-xylulose-5-phosphate (DXP) to 2-C-methyl-D-erythritol 4-phosphate (MEP).</text>
</comment>
<comment type="catalytic activity">
    <reaction evidence="1">
        <text>2-C-methyl-D-erythritol 4-phosphate + NADP(+) = 1-deoxy-D-xylulose 5-phosphate + NADPH + H(+)</text>
        <dbReference type="Rhea" id="RHEA:13717"/>
        <dbReference type="ChEBI" id="CHEBI:15378"/>
        <dbReference type="ChEBI" id="CHEBI:57783"/>
        <dbReference type="ChEBI" id="CHEBI:57792"/>
        <dbReference type="ChEBI" id="CHEBI:58262"/>
        <dbReference type="ChEBI" id="CHEBI:58349"/>
        <dbReference type="EC" id="1.1.1.267"/>
    </reaction>
    <physiologicalReaction direction="right-to-left" evidence="1">
        <dbReference type="Rhea" id="RHEA:13719"/>
    </physiologicalReaction>
</comment>
<comment type="cofactor">
    <cofactor evidence="1">
        <name>Mg(2+)</name>
        <dbReference type="ChEBI" id="CHEBI:18420"/>
    </cofactor>
    <cofactor evidence="1">
        <name>Mn(2+)</name>
        <dbReference type="ChEBI" id="CHEBI:29035"/>
    </cofactor>
</comment>
<comment type="pathway">
    <text evidence="1">Isoprenoid biosynthesis; isopentenyl diphosphate biosynthesis via DXP pathway; isopentenyl diphosphate from 1-deoxy-D-xylulose 5-phosphate: step 1/6.</text>
</comment>
<comment type="similarity">
    <text evidence="1">Belongs to the DXR family.</text>
</comment>
<accession>Q9CBU3</accession>
<keyword id="KW-0414">Isoprene biosynthesis</keyword>
<keyword id="KW-0464">Manganese</keyword>
<keyword id="KW-0479">Metal-binding</keyword>
<keyword id="KW-0521">NADP</keyword>
<keyword id="KW-0560">Oxidoreductase</keyword>
<keyword id="KW-1185">Reference proteome</keyword>
<protein>
    <recommendedName>
        <fullName evidence="1">1-deoxy-D-xylulose 5-phosphate reductoisomerase</fullName>
        <shortName evidence="1">DXP reductoisomerase</shortName>
        <ecNumber evidence="1">1.1.1.267</ecNumber>
    </recommendedName>
    <alternativeName>
        <fullName evidence="1">1-deoxyxylulose-5-phosphate reductoisomerase</fullName>
    </alternativeName>
    <alternativeName>
        <fullName evidence="1">2-C-methyl-D-erythritol 4-phosphate synthase</fullName>
    </alternativeName>
</protein>
<gene>
    <name evidence="1" type="primary">dxr</name>
    <name type="ordered locus">ML1583</name>
</gene>
<sequence length="406" mass="42315">MNNPIEGHAGGRLRVLVLGSTGSIGTQALEVIAANPDRFEVVGLAAGGAQLDTLLRQRAATGVTNIAIADDRAAQLAGDIPYHGTDAVTRLVEETEADVVLNALVGALGLRPTLAALHTGARLALANKESLVAGGSLVLAAAQPGQIVPVDSEHSALAQCLRGGTPDEVAKLVLTASGGPFRGWNAGDLERVTPEQAGVHPTWSMGTMNTLNSASLVNKGLELIEANLLFGIPYDRIEVVVHPQSIVHSMVTFIDGSTIAQASPPDMKLPISLALGWPQRVGGAARACAFTTASTWEFEPLDIDVFPAVELARHAGQIGGCMTAIYDAANEEAAEAFLQGRIGFPAIVATIADVLQRADQWAPQWGEGPATVDDVLDAQRWARERALCAVATASSGKVSDMVLERS</sequence>
<name>DXR_MYCLE</name>
<dbReference type="EC" id="1.1.1.267" evidence="1"/>
<dbReference type="EMBL" id="AL583922">
    <property type="protein sequence ID" value="CAC30534.1"/>
    <property type="molecule type" value="Genomic_DNA"/>
</dbReference>
<dbReference type="PIR" id="A87107">
    <property type="entry name" value="A87107"/>
</dbReference>
<dbReference type="RefSeq" id="NP_302094.1">
    <property type="nucleotide sequence ID" value="NC_002677.1"/>
</dbReference>
<dbReference type="RefSeq" id="WP_010908415.1">
    <property type="nucleotide sequence ID" value="NC_002677.1"/>
</dbReference>
<dbReference type="SMR" id="Q9CBU3"/>
<dbReference type="STRING" id="272631.gene:17575424"/>
<dbReference type="KEGG" id="mle:ML1583"/>
<dbReference type="PATRIC" id="fig|272631.5.peg.2984"/>
<dbReference type="Leproma" id="ML1583"/>
<dbReference type="eggNOG" id="COG0743">
    <property type="taxonomic scope" value="Bacteria"/>
</dbReference>
<dbReference type="HOGENOM" id="CLU_035714_4_0_11"/>
<dbReference type="OrthoDB" id="9806546at2"/>
<dbReference type="UniPathway" id="UPA00056">
    <property type="reaction ID" value="UER00092"/>
</dbReference>
<dbReference type="Proteomes" id="UP000000806">
    <property type="component" value="Chromosome"/>
</dbReference>
<dbReference type="GO" id="GO:0030604">
    <property type="term" value="F:1-deoxy-D-xylulose-5-phosphate reductoisomerase activity"/>
    <property type="evidence" value="ECO:0007669"/>
    <property type="project" value="UniProtKB-UniRule"/>
</dbReference>
<dbReference type="GO" id="GO:0030145">
    <property type="term" value="F:manganese ion binding"/>
    <property type="evidence" value="ECO:0007669"/>
    <property type="project" value="TreeGrafter"/>
</dbReference>
<dbReference type="GO" id="GO:0070402">
    <property type="term" value="F:NADPH binding"/>
    <property type="evidence" value="ECO:0007669"/>
    <property type="project" value="InterPro"/>
</dbReference>
<dbReference type="GO" id="GO:0051484">
    <property type="term" value="P:isopentenyl diphosphate biosynthetic process, methylerythritol 4-phosphate pathway involved in terpenoid biosynthetic process"/>
    <property type="evidence" value="ECO:0007669"/>
    <property type="project" value="TreeGrafter"/>
</dbReference>
<dbReference type="FunFam" id="3.40.50.720:FF:000045">
    <property type="entry name" value="1-deoxy-D-xylulose 5-phosphate reductoisomerase"/>
    <property type="match status" value="1"/>
</dbReference>
<dbReference type="Gene3D" id="1.10.1740.10">
    <property type="match status" value="1"/>
</dbReference>
<dbReference type="Gene3D" id="3.40.50.720">
    <property type="entry name" value="NAD(P)-binding Rossmann-like Domain"/>
    <property type="match status" value="1"/>
</dbReference>
<dbReference type="HAMAP" id="MF_00183">
    <property type="entry name" value="DXP_reductoisom"/>
    <property type="match status" value="1"/>
</dbReference>
<dbReference type="InterPro" id="IPR003821">
    <property type="entry name" value="DXP_reductoisomerase"/>
</dbReference>
<dbReference type="InterPro" id="IPR013644">
    <property type="entry name" value="DXP_reductoisomerase_C"/>
</dbReference>
<dbReference type="InterPro" id="IPR013512">
    <property type="entry name" value="DXP_reductoisomerase_N"/>
</dbReference>
<dbReference type="InterPro" id="IPR026877">
    <property type="entry name" value="DXPR_C"/>
</dbReference>
<dbReference type="InterPro" id="IPR036169">
    <property type="entry name" value="DXPR_C_sf"/>
</dbReference>
<dbReference type="InterPro" id="IPR036291">
    <property type="entry name" value="NAD(P)-bd_dom_sf"/>
</dbReference>
<dbReference type="NCBIfam" id="TIGR00243">
    <property type="entry name" value="Dxr"/>
    <property type="match status" value="1"/>
</dbReference>
<dbReference type="PANTHER" id="PTHR30525">
    <property type="entry name" value="1-DEOXY-D-XYLULOSE 5-PHOSPHATE REDUCTOISOMERASE"/>
    <property type="match status" value="1"/>
</dbReference>
<dbReference type="PANTHER" id="PTHR30525:SF0">
    <property type="entry name" value="1-DEOXY-D-XYLULOSE 5-PHOSPHATE REDUCTOISOMERASE, CHLOROPLASTIC"/>
    <property type="match status" value="1"/>
</dbReference>
<dbReference type="Pfam" id="PF08436">
    <property type="entry name" value="DXP_redisom_C"/>
    <property type="match status" value="1"/>
</dbReference>
<dbReference type="Pfam" id="PF02670">
    <property type="entry name" value="DXP_reductoisom"/>
    <property type="match status" value="1"/>
</dbReference>
<dbReference type="Pfam" id="PF13288">
    <property type="entry name" value="DXPR_C"/>
    <property type="match status" value="1"/>
</dbReference>
<dbReference type="PIRSF" id="PIRSF006205">
    <property type="entry name" value="Dxp_reductismrs"/>
    <property type="match status" value="1"/>
</dbReference>
<dbReference type="SUPFAM" id="SSF69055">
    <property type="entry name" value="1-deoxy-D-xylulose-5-phosphate reductoisomerase, C-terminal domain"/>
    <property type="match status" value="1"/>
</dbReference>
<dbReference type="SUPFAM" id="SSF55347">
    <property type="entry name" value="Glyceraldehyde-3-phosphate dehydrogenase-like, C-terminal domain"/>
    <property type="match status" value="1"/>
</dbReference>
<dbReference type="SUPFAM" id="SSF51735">
    <property type="entry name" value="NAD(P)-binding Rossmann-fold domains"/>
    <property type="match status" value="1"/>
</dbReference>
<reference key="1">
    <citation type="journal article" date="2001" name="Nature">
        <title>Massive gene decay in the leprosy bacillus.</title>
        <authorList>
            <person name="Cole S.T."/>
            <person name="Eiglmeier K."/>
            <person name="Parkhill J."/>
            <person name="James K.D."/>
            <person name="Thomson N.R."/>
            <person name="Wheeler P.R."/>
            <person name="Honore N."/>
            <person name="Garnier T."/>
            <person name="Churcher C.M."/>
            <person name="Harris D.E."/>
            <person name="Mungall K.L."/>
            <person name="Basham D."/>
            <person name="Brown D."/>
            <person name="Chillingworth T."/>
            <person name="Connor R."/>
            <person name="Davies R.M."/>
            <person name="Devlin K."/>
            <person name="Duthoy S."/>
            <person name="Feltwell T."/>
            <person name="Fraser A."/>
            <person name="Hamlin N."/>
            <person name="Holroyd S."/>
            <person name="Hornsby T."/>
            <person name="Jagels K."/>
            <person name="Lacroix C."/>
            <person name="Maclean J."/>
            <person name="Moule S."/>
            <person name="Murphy L.D."/>
            <person name="Oliver K."/>
            <person name="Quail M.A."/>
            <person name="Rajandream M.A."/>
            <person name="Rutherford K.M."/>
            <person name="Rutter S."/>
            <person name="Seeger K."/>
            <person name="Simon S."/>
            <person name="Simmonds M."/>
            <person name="Skelton J."/>
            <person name="Squares R."/>
            <person name="Squares S."/>
            <person name="Stevens K."/>
            <person name="Taylor K."/>
            <person name="Whitehead S."/>
            <person name="Woodward J.R."/>
            <person name="Barrell B.G."/>
        </authorList>
    </citation>
    <scope>NUCLEOTIDE SEQUENCE [LARGE SCALE GENOMIC DNA]</scope>
    <source>
        <strain>TN</strain>
    </source>
</reference>
<proteinExistence type="inferred from homology"/>
<feature type="chain" id="PRO_0000163676" description="1-deoxy-D-xylulose 5-phosphate reductoisomerase">
    <location>
        <begin position="1"/>
        <end position="406"/>
    </location>
</feature>
<feature type="binding site" evidence="1">
    <location>
        <position position="21"/>
    </location>
    <ligand>
        <name>NADPH</name>
        <dbReference type="ChEBI" id="CHEBI:57783"/>
    </ligand>
</feature>
<feature type="binding site" evidence="1">
    <location>
        <position position="22"/>
    </location>
    <ligand>
        <name>NADPH</name>
        <dbReference type="ChEBI" id="CHEBI:57783"/>
    </ligand>
</feature>
<feature type="binding site" evidence="1">
    <location>
        <position position="23"/>
    </location>
    <ligand>
        <name>NADPH</name>
        <dbReference type="ChEBI" id="CHEBI:57783"/>
    </ligand>
</feature>
<feature type="binding site" evidence="1">
    <location>
        <position position="24"/>
    </location>
    <ligand>
        <name>NADPH</name>
        <dbReference type="ChEBI" id="CHEBI:57783"/>
    </ligand>
</feature>
<feature type="binding site" evidence="1">
    <location>
        <position position="47"/>
    </location>
    <ligand>
        <name>NADPH</name>
        <dbReference type="ChEBI" id="CHEBI:57783"/>
    </ligand>
</feature>
<feature type="binding site" evidence="1">
    <location>
        <position position="50"/>
    </location>
    <ligand>
        <name>NADPH</name>
        <dbReference type="ChEBI" id="CHEBI:57783"/>
    </ligand>
</feature>
<feature type="binding site" evidence="1">
    <location>
        <position position="127"/>
    </location>
    <ligand>
        <name>NADPH</name>
        <dbReference type="ChEBI" id="CHEBI:57783"/>
    </ligand>
</feature>
<feature type="binding site" evidence="1">
    <location>
        <position position="128"/>
    </location>
    <ligand>
        <name>1-deoxy-D-xylulose 5-phosphate</name>
        <dbReference type="ChEBI" id="CHEBI:57792"/>
    </ligand>
</feature>
<feature type="binding site" evidence="1">
    <location>
        <position position="129"/>
    </location>
    <ligand>
        <name>NADPH</name>
        <dbReference type="ChEBI" id="CHEBI:57783"/>
    </ligand>
</feature>
<feature type="binding site" evidence="1">
    <location>
        <position position="151"/>
    </location>
    <ligand>
        <name>Mn(2+)</name>
        <dbReference type="ChEBI" id="CHEBI:29035"/>
    </ligand>
</feature>
<feature type="binding site" evidence="1">
    <location>
        <position position="152"/>
    </location>
    <ligand>
        <name>1-deoxy-D-xylulose 5-phosphate</name>
        <dbReference type="ChEBI" id="CHEBI:57792"/>
    </ligand>
</feature>
<feature type="binding site" evidence="1">
    <location>
        <position position="153"/>
    </location>
    <ligand>
        <name>1-deoxy-D-xylulose 5-phosphate</name>
        <dbReference type="ChEBI" id="CHEBI:57792"/>
    </ligand>
</feature>
<feature type="binding site" evidence="1">
    <location>
        <position position="153"/>
    </location>
    <ligand>
        <name>Mn(2+)</name>
        <dbReference type="ChEBI" id="CHEBI:29035"/>
    </ligand>
</feature>
<feature type="binding site" evidence="1">
    <location>
        <position position="177"/>
    </location>
    <ligand>
        <name>1-deoxy-D-xylulose 5-phosphate</name>
        <dbReference type="ChEBI" id="CHEBI:57792"/>
    </ligand>
</feature>
<feature type="binding site" evidence="1">
    <location>
        <position position="200"/>
    </location>
    <ligand>
        <name>1-deoxy-D-xylulose 5-phosphate</name>
        <dbReference type="ChEBI" id="CHEBI:57792"/>
    </ligand>
</feature>
<feature type="binding site" evidence="1">
    <location>
        <position position="206"/>
    </location>
    <ligand>
        <name>NADPH</name>
        <dbReference type="ChEBI" id="CHEBI:57783"/>
    </ligand>
</feature>
<feature type="binding site" evidence="1">
    <location>
        <position position="213"/>
    </location>
    <ligand>
        <name>1-deoxy-D-xylulose 5-phosphate</name>
        <dbReference type="ChEBI" id="CHEBI:57792"/>
    </ligand>
</feature>
<feature type="binding site" evidence="1">
    <location>
        <position position="218"/>
    </location>
    <ligand>
        <name>1-deoxy-D-xylulose 5-phosphate</name>
        <dbReference type="ChEBI" id="CHEBI:57792"/>
    </ligand>
</feature>
<feature type="binding site" evidence="1">
    <location>
        <position position="219"/>
    </location>
    <ligand>
        <name>1-deoxy-D-xylulose 5-phosphate</name>
        <dbReference type="ChEBI" id="CHEBI:57792"/>
    </ligand>
</feature>
<feature type="binding site" evidence="1">
    <location>
        <position position="222"/>
    </location>
    <ligand>
        <name>1-deoxy-D-xylulose 5-phosphate</name>
        <dbReference type="ChEBI" id="CHEBI:57792"/>
    </ligand>
</feature>
<feature type="binding site" evidence="1">
    <location>
        <position position="222"/>
    </location>
    <ligand>
        <name>Mn(2+)</name>
        <dbReference type="ChEBI" id="CHEBI:29035"/>
    </ligand>
</feature>
<organism>
    <name type="scientific">Mycobacterium leprae (strain TN)</name>
    <dbReference type="NCBI Taxonomy" id="272631"/>
    <lineage>
        <taxon>Bacteria</taxon>
        <taxon>Bacillati</taxon>
        <taxon>Actinomycetota</taxon>
        <taxon>Actinomycetes</taxon>
        <taxon>Mycobacteriales</taxon>
        <taxon>Mycobacteriaceae</taxon>
        <taxon>Mycobacterium</taxon>
    </lineage>
</organism>